<feature type="chain" id="PRO_0000073201" description="Caltrin-like protein 1">
    <location>
        <begin position="1"/>
        <end position="45"/>
    </location>
</feature>
<feature type="domain" description="Kazal-like" evidence="2">
    <location>
        <begin position="8"/>
        <end position="45"/>
    </location>
</feature>
<feature type="glycosylation site" description="N-linked (GlcNAc...) asparagine" evidence="1">
    <location>
        <position position="13"/>
    </location>
</feature>
<feature type="glycosylation site" description="N-linked (GlcNAc...) asparagine" evidence="1">
    <location>
        <position position="41"/>
    </location>
</feature>
<keyword id="KW-0106">Calcium</keyword>
<keyword id="KW-0903">Direct protein sequencing</keyword>
<keyword id="KW-0325">Glycoprotein</keyword>
<keyword id="KW-1185">Reference proteome</keyword>
<keyword id="KW-0964">Secreted</keyword>
<proteinExistence type="evidence at protein level"/>
<accession>P22074</accession>
<comment type="function">
    <text>Inhibits calcium transport into spermatozoa.</text>
</comment>
<comment type="subcellular location">
    <subcellularLocation>
        <location>Secreted</location>
    </subcellularLocation>
</comment>
<comment type="PTM">
    <text>Glycosylated.</text>
</comment>
<sequence length="45" mass="5081">AFAPSKVDSDRPNCSRYVQHLYMCTKELDPVCGTDGHTYGNRSIF</sequence>
<evidence type="ECO:0000255" key="1"/>
<evidence type="ECO:0000255" key="2">
    <source>
        <dbReference type="PROSITE-ProRule" id="PRU00798"/>
    </source>
</evidence>
<protein>
    <recommendedName>
        <fullName>Caltrin-like protein 1</fullName>
    </recommendedName>
    <alternativeName>
        <fullName>Caltrin-like protein I</fullName>
    </alternativeName>
</protein>
<name>CALT_CAVPO</name>
<organism>
    <name type="scientific">Cavia porcellus</name>
    <name type="common">Guinea pig</name>
    <dbReference type="NCBI Taxonomy" id="10141"/>
    <lineage>
        <taxon>Eukaryota</taxon>
        <taxon>Metazoa</taxon>
        <taxon>Chordata</taxon>
        <taxon>Craniata</taxon>
        <taxon>Vertebrata</taxon>
        <taxon>Euteleostomi</taxon>
        <taxon>Mammalia</taxon>
        <taxon>Eutheria</taxon>
        <taxon>Euarchontoglires</taxon>
        <taxon>Glires</taxon>
        <taxon>Rodentia</taxon>
        <taxon>Hystricomorpha</taxon>
        <taxon>Caviidae</taxon>
        <taxon>Cavia</taxon>
    </lineage>
</organism>
<reference key="1">
    <citation type="journal article" date="1990" name="J. Biol. Chem.">
        <title>Purification and structure of caltrin-like proteins from seminal vesicle of the guinea pig.</title>
        <authorList>
            <person name="Coronel C.E."/>
            <person name="San Agustin J."/>
            <person name="Lardy H.A."/>
        </authorList>
    </citation>
    <scope>PROTEIN SEQUENCE</scope>
    <source>
        <tissue>Seminal vesicle</tissue>
    </source>
</reference>
<dbReference type="PIR" id="A35752">
    <property type="entry name" value="A35752"/>
</dbReference>
<dbReference type="SMR" id="P22074"/>
<dbReference type="FunCoup" id="P22074">
    <property type="interactions" value="1"/>
</dbReference>
<dbReference type="STRING" id="10141.ENSCPOP00000007738"/>
<dbReference type="eggNOG" id="ENOG502SG2P">
    <property type="taxonomic scope" value="Eukaryota"/>
</dbReference>
<dbReference type="InParanoid" id="P22074"/>
<dbReference type="Proteomes" id="UP000005447">
    <property type="component" value="Unassembled WGS sequence"/>
</dbReference>
<dbReference type="GO" id="GO:0005576">
    <property type="term" value="C:extracellular region"/>
    <property type="evidence" value="ECO:0007669"/>
    <property type="project" value="UniProtKB-SubCell"/>
</dbReference>
<dbReference type="Gene3D" id="3.30.60.30">
    <property type="match status" value="1"/>
</dbReference>
<dbReference type="InterPro" id="IPR002350">
    <property type="entry name" value="Kazal_dom"/>
</dbReference>
<dbReference type="InterPro" id="IPR036058">
    <property type="entry name" value="Kazal_dom_sf"/>
</dbReference>
<dbReference type="Pfam" id="PF00050">
    <property type="entry name" value="Kazal_1"/>
    <property type="match status" value="1"/>
</dbReference>
<dbReference type="SUPFAM" id="SSF100895">
    <property type="entry name" value="Kazal-type serine protease inhibitors"/>
    <property type="match status" value="1"/>
</dbReference>
<dbReference type="PROSITE" id="PS51465">
    <property type="entry name" value="KAZAL_2"/>
    <property type="match status" value="1"/>
</dbReference>